<sequence length="168" mass="18251">MAQNEETTEAVEAEETLTSYTSESGAAEAAAPKKERPALTVAGAAVGRRKEAVARVRVVPGSGKWIINGRELANYFPNKLHQQDVNEPFKILDLDGAYDVIARIHGGGPSGQAGALRLGIARSLNEIDIENNRAILKKAGYLTRDARVIERKKAGLKKARKAQQYSKR</sequence>
<evidence type="ECO:0000255" key="1">
    <source>
        <dbReference type="HAMAP-Rule" id="MF_00532"/>
    </source>
</evidence>
<evidence type="ECO:0000256" key="2">
    <source>
        <dbReference type="SAM" id="MobiDB-lite"/>
    </source>
</evidence>
<evidence type="ECO:0000305" key="3"/>
<accession>A0JZ26</accession>
<organism>
    <name type="scientific">Arthrobacter sp. (strain FB24)</name>
    <dbReference type="NCBI Taxonomy" id="290399"/>
    <lineage>
        <taxon>Bacteria</taxon>
        <taxon>Bacillati</taxon>
        <taxon>Actinomycetota</taxon>
        <taxon>Actinomycetes</taxon>
        <taxon>Micrococcales</taxon>
        <taxon>Micrococcaceae</taxon>
        <taxon>Arthrobacter</taxon>
    </lineage>
</organism>
<proteinExistence type="inferred from homology"/>
<comment type="similarity">
    <text evidence="1">Belongs to the universal ribosomal protein uS9 family.</text>
</comment>
<protein>
    <recommendedName>
        <fullName evidence="1">Small ribosomal subunit protein uS9</fullName>
    </recommendedName>
    <alternativeName>
        <fullName evidence="3">30S ribosomal protein S9</fullName>
    </alternativeName>
</protein>
<name>RS9_ARTS2</name>
<dbReference type="EMBL" id="CP000454">
    <property type="protein sequence ID" value="ABK04296.1"/>
    <property type="molecule type" value="Genomic_DNA"/>
</dbReference>
<dbReference type="RefSeq" id="WP_011692755.1">
    <property type="nucleotide sequence ID" value="NC_008541.1"/>
</dbReference>
<dbReference type="SMR" id="A0JZ26"/>
<dbReference type="STRING" id="290399.Arth_2917"/>
<dbReference type="KEGG" id="art:Arth_2917"/>
<dbReference type="eggNOG" id="COG0103">
    <property type="taxonomic scope" value="Bacteria"/>
</dbReference>
<dbReference type="HOGENOM" id="CLU_046483_2_0_11"/>
<dbReference type="OrthoDB" id="9803965at2"/>
<dbReference type="Proteomes" id="UP000000754">
    <property type="component" value="Chromosome"/>
</dbReference>
<dbReference type="GO" id="GO:0005737">
    <property type="term" value="C:cytoplasm"/>
    <property type="evidence" value="ECO:0007669"/>
    <property type="project" value="UniProtKB-ARBA"/>
</dbReference>
<dbReference type="GO" id="GO:0015935">
    <property type="term" value="C:small ribosomal subunit"/>
    <property type="evidence" value="ECO:0007669"/>
    <property type="project" value="TreeGrafter"/>
</dbReference>
<dbReference type="GO" id="GO:0003723">
    <property type="term" value="F:RNA binding"/>
    <property type="evidence" value="ECO:0007669"/>
    <property type="project" value="TreeGrafter"/>
</dbReference>
<dbReference type="GO" id="GO:0003735">
    <property type="term" value="F:structural constituent of ribosome"/>
    <property type="evidence" value="ECO:0007669"/>
    <property type="project" value="InterPro"/>
</dbReference>
<dbReference type="GO" id="GO:0006412">
    <property type="term" value="P:translation"/>
    <property type="evidence" value="ECO:0007669"/>
    <property type="project" value="UniProtKB-UniRule"/>
</dbReference>
<dbReference type="FunFam" id="3.30.230.10:FF:000001">
    <property type="entry name" value="30S ribosomal protein S9"/>
    <property type="match status" value="1"/>
</dbReference>
<dbReference type="Gene3D" id="3.30.230.10">
    <property type="match status" value="1"/>
</dbReference>
<dbReference type="HAMAP" id="MF_00532_B">
    <property type="entry name" value="Ribosomal_uS9_B"/>
    <property type="match status" value="1"/>
</dbReference>
<dbReference type="InterPro" id="IPR020568">
    <property type="entry name" value="Ribosomal_Su5_D2-typ_SF"/>
</dbReference>
<dbReference type="InterPro" id="IPR000754">
    <property type="entry name" value="Ribosomal_uS9"/>
</dbReference>
<dbReference type="InterPro" id="IPR023035">
    <property type="entry name" value="Ribosomal_uS9_bac/plastid"/>
</dbReference>
<dbReference type="InterPro" id="IPR020574">
    <property type="entry name" value="Ribosomal_uS9_CS"/>
</dbReference>
<dbReference type="InterPro" id="IPR014721">
    <property type="entry name" value="Ribsml_uS5_D2-typ_fold_subgr"/>
</dbReference>
<dbReference type="NCBIfam" id="NF001099">
    <property type="entry name" value="PRK00132.1"/>
    <property type="match status" value="1"/>
</dbReference>
<dbReference type="PANTHER" id="PTHR21569">
    <property type="entry name" value="RIBOSOMAL PROTEIN S9"/>
    <property type="match status" value="1"/>
</dbReference>
<dbReference type="PANTHER" id="PTHR21569:SF1">
    <property type="entry name" value="SMALL RIBOSOMAL SUBUNIT PROTEIN US9M"/>
    <property type="match status" value="1"/>
</dbReference>
<dbReference type="Pfam" id="PF00380">
    <property type="entry name" value="Ribosomal_S9"/>
    <property type="match status" value="1"/>
</dbReference>
<dbReference type="SUPFAM" id="SSF54211">
    <property type="entry name" value="Ribosomal protein S5 domain 2-like"/>
    <property type="match status" value="1"/>
</dbReference>
<dbReference type="PROSITE" id="PS00360">
    <property type="entry name" value="RIBOSOMAL_S9"/>
    <property type="match status" value="1"/>
</dbReference>
<reference key="1">
    <citation type="journal article" date="2013" name="Stand. Genomic Sci.">
        <title>Complete genome sequence of Arthrobacter sp. strain FB24.</title>
        <authorList>
            <person name="Nakatsu C.H."/>
            <person name="Barabote R."/>
            <person name="Thompson S."/>
            <person name="Bruce D."/>
            <person name="Detter C."/>
            <person name="Brettin T."/>
            <person name="Han C."/>
            <person name="Beasley F."/>
            <person name="Chen W."/>
            <person name="Konopka A."/>
            <person name="Xie G."/>
        </authorList>
    </citation>
    <scope>NUCLEOTIDE SEQUENCE [LARGE SCALE GENOMIC DNA]</scope>
    <source>
        <strain>FB24</strain>
    </source>
</reference>
<feature type="chain" id="PRO_1000051156" description="Small ribosomal subunit protein uS9">
    <location>
        <begin position="1"/>
        <end position="168"/>
    </location>
</feature>
<feature type="region of interest" description="Disordered" evidence="2">
    <location>
        <begin position="1"/>
        <end position="34"/>
    </location>
</feature>
<feature type="compositionally biased region" description="Acidic residues" evidence="2">
    <location>
        <begin position="1"/>
        <end position="15"/>
    </location>
</feature>
<keyword id="KW-1185">Reference proteome</keyword>
<keyword id="KW-0687">Ribonucleoprotein</keyword>
<keyword id="KW-0689">Ribosomal protein</keyword>
<gene>
    <name evidence="1" type="primary">rpsI</name>
    <name type="ordered locus">Arth_2917</name>
</gene>